<protein>
    <recommendedName>
        <fullName>L-arabinose-binding periplasmic protein</fullName>
        <shortName>ABP</shortName>
    </recommendedName>
</protein>
<name>ARAF_ECOLI</name>
<accession>P02924</accession>
<sequence>MHKFTKALAAIGLAAVMSQSAMAENLKLGFLVKQPEEPWFQTEWKFADKAGKDLGFEVIKIAVPDGEKTLNAIDSLAASGAKGFVICTPDPKLGSAIVAKARGYDMKVIAVDDQFVNAKGKPMDTVPLVMMAATKIGERQGQELYKEMQKRGWDVKESAVMAITANELDTARRRTTGSMDALKAAGFPEKQIYQVPTKSNDIPGAFDAANSMLVQHPEVKHWLIVGMNDSTVLGGVRATEGQGFKAADIIGIGINGVDAVSELSKAQATGFYGSLLPSPDVHGYKSSEMLYNWVAKDVEPPKFTEVTDVVLITRDNFKEELEKKGLGGK</sequence>
<feature type="signal peptide" evidence="2 3">
    <location>
        <begin position="1"/>
        <end position="23"/>
    </location>
</feature>
<feature type="chain" id="PRO_0000031720" description="L-arabinose-binding periplasmic protein">
    <location>
        <begin position="24"/>
        <end position="329"/>
    </location>
</feature>
<feature type="site" description="The binding site for the sugar molecule has not yet been established, but C-87 may be involved">
    <location>
        <position position="87"/>
    </location>
</feature>
<feature type="mutagenesis site" description="Improves binding to galactose.">
    <original>P</original>
    <variation>G</variation>
    <location>
        <position position="277"/>
    </location>
</feature>
<feature type="sequence conflict" description="In Ref. 1; CAA29476." evidence="4" ref="1">
    <original>Q</original>
    <variation>E</variation>
    <location>
        <position position="194"/>
    </location>
</feature>
<feature type="sequence conflict" description="In Ref. 1; CAA29476." evidence="4" ref="1">
    <original>V</original>
    <variation>L</variation>
    <location>
        <position position="281"/>
    </location>
</feature>
<feature type="strand" evidence="5">
    <location>
        <begin position="26"/>
        <end position="33"/>
    </location>
</feature>
<feature type="helix" evidence="5">
    <location>
        <begin position="38"/>
        <end position="54"/>
    </location>
</feature>
<feature type="strand" evidence="5">
    <location>
        <begin position="56"/>
        <end position="62"/>
    </location>
</feature>
<feature type="helix" evidence="5">
    <location>
        <begin position="66"/>
        <end position="78"/>
    </location>
</feature>
<feature type="strand" evidence="5">
    <location>
        <begin position="83"/>
        <end position="87"/>
    </location>
</feature>
<feature type="helix" evidence="5">
    <location>
        <begin position="91"/>
        <end position="93"/>
    </location>
</feature>
<feature type="helix" evidence="5">
    <location>
        <begin position="94"/>
        <end position="103"/>
    </location>
</feature>
<feature type="strand" evidence="5">
    <location>
        <begin position="107"/>
        <end position="113"/>
    </location>
</feature>
<feature type="strand" evidence="5">
    <location>
        <begin position="128"/>
        <end position="131"/>
    </location>
</feature>
<feature type="helix" evidence="5">
    <location>
        <begin position="133"/>
        <end position="151"/>
    </location>
</feature>
<feature type="helix" evidence="5">
    <location>
        <begin position="155"/>
        <end position="157"/>
    </location>
</feature>
<feature type="strand" evidence="5">
    <location>
        <begin position="158"/>
        <end position="164"/>
    </location>
</feature>
<feature type="helix" evidence="5">
    <location>
        <begin position="169"/>
        <end position="185"/>
    </location>
</feature>
<feature type="helix" evidence="5">
    <location>
        <begin position="189"/>
        <end position="191"/>
    </location>
</feature>
<feature type="strand" evidence="5">
    <location>
        <begin position="192"/>
        <end position="196"/>
    </location>
</feature>
<feature type="strand" evidence="5">
    <location>
        <begin position="198"/>
        <end position="201"/>
    </location>
</feature>
<feature type="helix" evidence="5">
    <location>
        <begin position="202"/>
        <end position="213"/>
    </location>
</feature>
<feature type="strand" evidence="5">
    <location>
        <begin position="220"/>
        <end position="225"/>
    </location>
</feature>
<feature type="helix" evidence="5">
    <location>
        <begin position="229"/>
        <end position="241"/>
    </location>
</feature>
<feature type="helix" evidence="5">
    <location>
        <begin position="246"/>
        <end position="248"/>
    </location>
</feature>
<feature type="strand" evidence="5">
    <location>
        <begin position="249"/>
        <end position="256"/>
    </location>
</feature>
<feature type="helix" evidence="5">
    <location>
        <begin position="257"/>
        <end position="259"/>
    </location>
</feature>
<feature type="helix" evidence="5">
    <location>
        <begin position="260"/>
        <end position="263"/>
    </location>
</feature>
<feature type="strand" evidence="5">
    <location>
        <begin position="265"/>
        <end position="267"/>
    </location>
</feature>
<feature type="strand" evidence="5">
    <location>
        <begin position="270"/>
        <end position="276"/>
    </location>
</feature>
<feature type="helix" evidence="5">
    <location>
        <begin position="279"/>
        <end position="296"/>
    </location>
</feature>
<feature type="strand" evidence="5">
    <location>
        <begin position="302"/>
        <end position="306"/>
    </location>
</feature>
<feature type="strand" evidence="5">
    <location>
        <begin position="310"/>
        <end position="313"/>
    </location>
</feature>
<feature type="turn" evidence="5">
    <location>
        <begin position="314"/>
        <end position="316"/>
    </location>
</feature>
<feature type="helix" evidence="5">
    <location>
        <begin position="317"/>
        <end position="323"/>
    </location>
</feature>
<organism>
    <name type="scientific">Escherichia coli (strain K12)</name>
    <dbReference type="NCBI Taxonomy" id="83333"/>
    <lineage>
        <taxon>Bacteria</taxon>
        <taxon>Pseudomonadati</taxon>
        <taxon>Pseudomonadota</taxon>
        <taxon>Gammaproteobacteria</taxon>
        <taxon>Enterobacterales</taxon>
        <taxon>Enterobacteriaceae</taxon>
        <taxon>Escherichia</taxon>
    </lineage>
</organism>
<comment type="function">
    <text>Involved in the high-affinity L-arabinose membrane transport system. Binds with high affinity to arabinose, but can also bind D-galactose (approximately 2-fold reduction) and D-fucose (approximately 40-fold reduction).</text>
</comment>
<comment type="subcellular location">
    <subcellularLocation>
        <location>Periplasm</location>
    </subcellularLocation>
</comment>
<comment type="induction">
    <text evidence="1">Induced by arabinose. Transcription is dependent on the transcription factor AraC, the cAMP receptor protein (CRP) and cAMP.</text>
</comment>
<comment type="similarity">
    <text evidence="4">Belongs to the bacterial solute-binding protein 2 family.</text>
</comment>
<reference key="1">
    <citation type="journal article" date="1987" name="J. Mol. Biol.">
        <title>High-affinity L-arabinose transport operon. Nucleotide sequence and analysis of gene products.</title>
        <authorList>
            <person name="Scripture J.B."/>
            <person name="Voelker C."/>
            <person name="Miller S."/>
            <person name="O'Donnell R.T."/>
            <person name="Polgar L."/>
            <person name="Rade J."/>
            <person name="Horazdovsky B.F."/>
            <person name="Hogg R.W."/>
        </authorList>
    </citation>
    <scope>NUCLEOTIDE SEQUENCE [GENOMIC DNA]</scope>
    <source>
        <strain>BEK 180</strain>
    </source>
</reference>
<reference key="2">
    <citation type="journal article" date="1996" name="DNA Res.">
        <title>A 460-kb DNA sequence of the Escherichia coli K-12 genome corresponding to the 40.1-50.0 min region on the linkage map.</title>
        <authorList>
            <person name="Itoh T."/>
            <person name="Aiba H."/>
            <person name="Baba T."/>
            <person name="Fujita K."/>
            <person name="Hayashi K."/>
            <person name="Inada T."/>
            <person name="Isono K."/>
            <person name="Kasai H."/>
            <person name="Kimura S."/>
            <person name="Kitakawa M."/>
            <person name="Kitagawa M."/>
            <person name="Makino K."/>
            <person name="Miki T."/>
            <person name="Mizobuchi K."/>
            <person name="Mori H."/>
            <person name="Mori T."/>
            <person name="Motomura K."/>
            <person name="Nakade S."/>
            <person name="Nakamura Y."/>
            <person name="Nashimoto H."/>
            <person name="Nishio Y."/>
            <person name="Oshima T."/>
            <person name="Saito N."/>
            <person name="Sampei G."/>
            <person name="Seki Y."/>
            <person name="Sivasundaram S."/>
            <person name="Tagami H."/>
            <person name="Takeda J."/>
            <person name="Takemoto K."/>
            <person name="Wada C."/>
            <person name="Yamamoto Y."/>
            <person name="Horiuchi T."/>
        </authorList>
    </citation>
    <scope>NUCLEOTIDE SEQUENCE [LARGE SCALE GENOMIC DNA]</scope>
    <source>
        <strain>K12 / W3110 / ATCC 27325 / DSM 5911</strain>
    </source>
</reference>
<reference key="3">
    <citation type="journal article" date="1997" name="Science">
        <title>The complete genome sequence of Escherichia coli K-12.</title>
        <authorList>
            <person name="Blattner F.R."/>
            <person name="Plunkett G. III"/>
            <person name="Bloch C.A."/>
            <person name="Perna N.T."/>
            <person name="Burland V."/>
            <person name="Riley M."/>
            <person name="Collado-Vides J."/>
            <person name="Glasner J.D."/>
            <person name="Rode C.K."/>
            <person name="Mayhew G.F."/>
            <person name="Gregor J."/>
            <person name="Davis N.W."/>
            <person name="Kirkpatrick H.A."/>
            <person name="Goeden M.A."/>
            <person name="Rose D.J."/>
            <person name="Mau B."/>
            <person name="Shao Y."/>
        </authorList>
    </citation>
    <scope>NUCLEOTIDE SEQUENCE [LARGE SCALE GENOMIC DNA]</scope>
    <source>
        <strain>K12 / MG1655 / ATCC 47076</strain>
    </source>
</reference>
<reference key="4">
    <citation type="journal article" date="2006" name="Mol. Syst. Biol.">
        <title>Highly accurate genome sequences of Escherichia coli K-12 strains MG1655 and W3110.</title>
        <authorList>
            <person name="Hayashi K."/>
            <person name="Morooka N."/>
            <person name="Yamamoto Y."/>
            <person name="Fujita K."/>
            <person name="Isono K."/>
            <person name="Choi S."/>
            <person name="Ohtsubo E."/>
            <person name="Baba T."/>
            <person name="Wanner B.L."/>
            <person name="Mori H."/>
            <person name="Horiuchi T."/>
        </authorList>
    </citation>
    <scope>NUCLEOTIDE SEQUENCE [LARGE SCALE GENOMIC DNA]</scope>
    <source>
        <strain>K12 / W3110 / ATCC 27325 / DSM 5911</strain>
    </source>
</reference>
<reference key="5">
    <citation type="journal article" date="1983" name="J. Biol. Chem.">
        <title>The nucleotide sequences defining the signal peptides of the galactose-binding protein and the arabinose-binding protein.</title>
        <authorList>
            <person name="Scripture J.B."/>
            <person name="Hogg R.W."/>
        </authorList>
    </citation>
    <scope>NUCLEOTIDE SEQUENCE [GENOMIC DNA] OF 1-37</scope>
</reference>
<reference key="6">
    <citation type="journal article" date="1977" name="J. Biol. Chem.">
        <title>Amino acid sequence of the L-arabinose-binding protein from Escherichia coli B/r.</title>
        <authorList>
            <person name="Hogg R.W."/>
            <person name="Hermodson M.A."/>
        </authorList>
    </citation>
    <scope>PROTEIN SEQUENCE OF 24-329</scope>
    <source>
        <strain>B/R</strain>
    </source>
</reference>
<reference key="7">
    <citation type="journal article" date="1997" name="Electrophoresis">
        <title>Comparing the predicted and observed properties of proteins encoded in the genome of Escherichia coli K-12.</title>
        <authorList>
            <person name="Link A.J."/>
            <person name="Robison K."/>
            <person name="Church G.M."/>
        </authorList>
    </citation>
    <scope>PROTEIN SEQUENCE OF 24-35</scope>
    <source>
        <strain>K12 / EMG2</strain>
    </source>
</reference>
<reference key="8">
    <citation type="journal article" date="1990" name="J. Mol. Biol.">
        <title>Characterization of the Escherichia coli araFGH and araJ promoters.</title>
        <authorList>
            <person name="Hendrickson W."/>
            <person name="Stoner C."/>
            <person name="Schleif R."/>
        </authorList>
    </citation>
    <scope>INDUCTION</scope>
</reference>
<reference key="9">
    <citation type="journal article" date="1997" name="Electrophoresis">
        <title>Escherichia coli proteome analysis using the gene-protein database.</title>
        <authorList>
            <person name="VanBogelen R.A."/>
            <person name="Abshire K.Z."/>
            <person name="Moldover B."/>
            <person name="Olson E.R."/>
            <person name="Neidhardt F.C."/>
        </authorList>
    </citation>
    <scope>IDENTIFICATION BY 2D-GEL</scope>
</reference>
<reference key="10">
    <citation type="journal article" date="1981" name="J. Biol. Chem.">
        <title>L-arabinose-binding protein-sugar complex at 2.4-A resolution. Stereochemistry and evidence for a structural change.</title>
        <authorList>
            <person name="Newcomer M.E."/>
            <person name="Gilliland G.L."/>
            <person name="Quiocho F.A."/>
        </authorList>
    </citation>
    <scope>X-RAY CRYSTALLOGRAPHY (2.4 ANGSTROMS) OF 24-329</scope>
</reference>
<reference key="11">
    <citation type="journal article" date="1977" name="J. Biol. Chem.">
        <title>The 2.8-A resolution structure of the L-arabinose-binding protein from Escherichia coli. Polypeptide chain folding, domain similarity, and probable location of sugar-binding site.</title>
        <authorList>
            <person name="Quiocho F.A."/>
            <person name="Gilliland G.L."/>
            <person name="Phillips G.N. Jr."/>
        </authorList>
    </citation>
    <scope>X-RAY CRYSTALLOGRAPHY (2.8 ANGSTROMS) OF 24-329</scope>
</reference>
<reference key="12">
    <citation type="journal article" date="1990" name="J. Biol. Chem.">
        <title>A Pro to Gly mutation in the hinge of the arabinose-binding protein enhances binding and alters specificity. Sugar-binding and crystallographic studies.</title>
        <authorList>
            <person name="Vermersch P.S."/>
            <person name="Tesmer J.J.G."/>
            <person name="Lemon D.D."/>
            <person name="Quiocho F.A."/>
        </authorList>
    </citation>
    <scope>X-RAY CRYSTALLOGRAPHY (1.9 ANGSTROMS) OF 24-329 OF MUTANT GLY-277</scope>
</reference>
<dbReference type="EMBL" id="X06091">
    <property type="protein sequence ID" value="CAA29476.1"/>
    <property type="molecule type" value="Genomic_DNA"/>
</dbReference>
<dbReference type="EMBL" id="U00096">
    <property type="protein sequence ID" value="AAC74971.1"/>
    <property type="molecule type" value="Genomic_DNA"/>
</dbReference>
<dbReference type="EMBL" id="AP009048">
    <property type="protein sequence ID" value="BAA15721.1"/>
    <property type="molecule type" value="Genomic_DNA"/>
</dbReference>
<dbReference type="EMBL" id="K00420">
    <property type="protein sequence ID" value="AAA23472.1"/>
    <property type="molecule type" value="Genomic_DNA"/>
</dbReference>
<dbReference type="PIR" id="E64953">
    <property type="entry name" value="JGECA"/>
</dbReference>
<dbReference type="RefSeq" id="NP_416414.1">
    <property type="nucleotide sequence ID" value="NC_000913.3"/>
</dbReference>
<dbReference type="RefSeq" id="WP_000548675.1">
    <property type="nucleotide sequence ID" value="NZ_STEB01000026.1"/>
</dbReference>
<dbReference type="PDB" id="1ABE">
    <property type="method" value="X-ray"/>
    <property type="resolution" value="1.70 A"/>
    <property type="chains" value="A=24-329"/>
</dbReference>
<dbReference type="PDB" id="1ABF">
    <property type="method" value="X-ray"/>
    <property type="resolution" value="1.90 A"/>
    <property type="chains" value="A=24-329"/>
</dbReference>
<dbReference type="PDB" id="1APB">
    <property type="method" value="X-ray"/>
    <property type="resolution" value="1.76 A"/>
    <property type="chains" value="A=24-329"/>
</dbReference>
<dbReference type="PDB" id="1BAP">
    <property type="method" value="X-ray"/>
    <property type="resolution" value="1.75 A"/>
    <property type="chains" value="A=24-329"/>
</dbReference>
<dbReference type="PDB" id="2WRZ">
    <property type="method" value="X-ray"/>
    <property type="resolution" value="2.20 A"/>
    <property type="chains" value="A/B=24-329"/>
</dbReference>
<dbReference type="PDB" id="5ABP">
    <property type="method" value="X-ray"/>
    <property type="resolution" value="1.80 A"/>
    <property type="chains" value="A=24-329"/>
</dbReference>
<dbReference type="PDB" id="6ABP">
    <property type="method" value="X-ray"/>
    <property type="resolution" value="1.67 A"/>
    <property type="chains" value="A=24-329"/>
</dbReference>
<dbReference type="PDB" id="7ABP">
    <property type="method" value="X-ray"/>
    <property type="resolution" value="1.67 A"/>
    <property type="chains" value="A=24-329"/>
</dbReference>
<dbReference type="PDB" id="8ABP">
    <property type="method" value="X-ray"/>
    <property type="resolution" value="1.49 A"/>
    <property type="chains" value="A=24-329"/>
</dbReference>
<dbReference type="PDB" id="9ABP">
    <property type="method" value="X-ray"/>
    <property type="resolution" value="1.97 A"/>
    <property type="chains" value="A=24-329"/>
</dbReference>
<dbReference type="PDBsum" id="1ABE"/>
<dbReference type="PDBsum" id="1ABF"/>
<dbReference type="PDBsum" id="1APB"/>
<dbReference type="PDBsum" id="1BAP"/>
<dbReference type="PDBsum" id="2WRZ"/>
<dbReference type="PDBsum" id="5ABP"/>
<dbReference type="PDBsum" id="6ABP"/>
<dbReference type="PDBsum" id="7ABP"/>
<dbReference type="PDBsum" id="8ABP"/>
<dbReference type="PDBsum" id="9ABP"/>
<dbReference type="BMRB" id="P02924"/>
<dbReference type="SMR" id="P02924"/>
<dbReference type="BioGRID" id="4261850">
    <property type="interactions" value="26"/>
</dbReference>
<dbReference type="ComplexPortal" id="CPX-4314">
    <property type="entry name" value="Arabinose ABC transporter complex"/>
</dbReference>
<dbReference type="FunCoup" id="P02924">
    <property type="interactions" value="224"/>
</dbReference>
<dbReference type="IntAct" id="P02924">
    <property type="interactions" value="6"/>
</dbReference>
<dbReference type="STRING" id="511145.b1901"/>
<dbReference type="DrugBank" id="DB03485">
    <property type="generic name" value="alpha-D-Fucopyranose"/>
</dbReference>
<dbReference type="DrugBank" id="DB03142">
    <property type="generic name" value="Alpha-L-Arabinose"/>
</dbReference>
<dbReference type="DrugBank" id="DB04062">
    <property type="generic name" value="beta-D-fucose"/>
</dbReference>
<dbReference type="DrugBank" id="DB03246">
    <property type="generic name" value="Beta-L-Arabinose"/>
</dbReference>
<dbReference type="TCDB" id="3.A.1.2.2">
    <property type="family name" value="the atp-binding cassette (abc) superfamily"/>
</dbReference>
<dbReference type="jPOST" id="P02924"/>
<dbReference type="PaxDb" id="511145-b1901"/>
<dbReference type="EnsemblBacteria" id="AAC74971">
    <property type="protein sequence ID" value="AAC74971"/>
    <property type="gene ID" value="b1901"/>
</dbReference>
<dbReference type="GeneID" id="75202696"/>
<dbReference type="GeneID" id="946409"/>
<dbReference type="KEGG" id="ecj:JW1889"/>
<dbReference type="KEGG" id="eco:b1901"/>
<dbReference type="KEGG" id="ecoc:C3026_10790"/>
<dbReference type="PATRIC" id="fig|1411691.4.peg.349"/>
<dbReference type="EchoBASE" id="EB0055"/>
<dbReference type="eggNOG" id="COG1879">
    <property type="taxonomic scope" value="Bacteria"/>
</dbReference>
<dbReference type="HOGENOM" id="CLU_046821_1_0_6"/>
<dbReference type="InParanoid" id="P02924"/>
<dbReference type="OMA" id="EWKFADQ"/>
<dbReference type="OrthoDB" id="7833812at2"/>
<dbReference type="PhylomeDB" id="P02924"/>
<dbReference type="BioCyc" id="EcoCyc:ARAF-MONOMER"/>
<dbReference type="BioCyc" id="MetaCyc:ARAF-MONOMER"/>
<dbReference type="EvolutionaryTrace" id="P02924"/>
<dbReference type="PRO" id="PR:P02924"/>
<dbReference type="Proteomes" id="UP000000625">
    <property type="component" value="Chromosome"/>
</dbReference>
<dbReference type="GO" id="GO:0055052">
    <property type="term" value="C:ATP-binding cassette (ABC) transporter complex, substrate-binding subunit-containing"/>
    <property type="evidence" value="ECO:0000303"/>
    <property type="project" value="ComplexPortal"/>
</dbReference>
<dbReference type="GO" id="GO:0016020">
    <property type="term" value="C:membrane"/>
    <property type="evidence" value="ECO:0000303"/>
    <property type="project" value="ComplexPortal"/>
</dbReference>
<dbReference type="GO" id="GO:0030288">
    <property type="term" value="C:outer membrane-bounded periplasmic space"/>
    <property type="evidence" value="ECO:0000314"/>
    <property type="project" value="EcoCyc"/>
</dbReference>
<dbReference type="GO" id="GO:0015407">
    <property type="term" value="F:ABC-type monosaccharide transporter activity"/>
    <property type="evidence" value="ECO:0000315"/>
    <property type="project" value="EcoCyc"/>
</dbReference>
<dbReference type="GO" id="GO:0030246">
    <property type="term" value="F:carbohydrate binding"/>
    <property type="evidence" value="ECO:0000318"/>
    <property type="project" value="GO_Central"/>
</dbReference>
<dbReference type="GO" id="GO:0048029">
    <property type="term" value="F:monosaccharide binding"/>
    <property type="evidence" value="ECO:0000314"/>
    <property type="project" value="EcoCyc"/>
</dbReference>
<dbReference type="GO" id="GO:0042882">
    <property type="term" value="P:L-arabinose transmembrane transport"/>
    <property type="evidence" value="ECO:0000303"/>
    <property type="project" value="ComplexPortal"/>
</dbReference>
<dbReference type="CDD" id="cd01540">
    <property type="entry name" value="PBP1_arabinose_binding"/>
    <property type="match status" value="1"/>
</dbReference>
<dbReference type="FunFam" id="3.40.50.2300:FF:000075">
    <property type="entry name" value="L-arabinose-binding periplasmic protein"/>
    <property type="match status" value="1"/>
</dbReference>
<dbReference type="Gene3D" id="3.40.50.2300">
    <property type="match status" value="2"/>
</dbReference>
<dbReference type="InterPro" id="IPR026266">
    <property type="entry name" value="AraF"/>
</dbReference>
<dbReference type="InterPro" id="IPR050555">
    <property type="entry name" value="Bact_Solute-Bind_Prot2"/>
</dbReference>
<dbReference type="InterPro" id="IPR001761">
    <property type="entry name" value="Peripla_BP/Lac1_sug-bd_dom"/>
</dbReference>
<dbReference type="InterPro" id="IPR028082">
    <property type="entry name" value="Peripla_BP_I"/>
</dbReference>
<dbReference type="PANTHER" id="PTHR30036">
    <property type="entry name" value="D-XYLOSE-BINDING PERIPLASMIC PROTEIN"/>
    <property type="match status" value="1"/>
</dbReference>
<dbReference type="PANTHER" id="PTHR30036:SF6">
    <property type="entry name" value="L-ARABINOSE-BINDING PERIPLASMIC PROTEIN"/>
    <property type="match status" value="1"/>
</dbReference>
<dbReference type="Pfam" id="PF00532">
    <property type="entry name" value="Peripla_BP_1"/>
    <property type="match status" value="1"/>
</dbReference>
<dbReference type="PIRSF" id="PIRSF002816">
    <property type="entry name" value="AraF"/>
    <property type="match status" value="1"/>
</dbReference>
<dbReference type="SUPFAM" id="SSF53822">
    <property type="entry name" value="Periplasmic binding protein-like I"/>
    <property type="match status" value="1"/>
</dbReference>
<evidence type="ECO:0000269" key="1">
    <source>
    </source>
</evidence>
<evidence type="ECO:0000269" key="2">
    <source>
    </source>
</evidence>
<evidence type="ECO:0000269" key="3">
    <source>
    </source>
</evidence>
<evidence type="ECO:0000305" key="4"/>
<evidence type="ECO:0007829" key="5">
    <source>
        <dbReference type="PDB" id="8ABP"/>
    </source>
</evidence>
<proteinExistence type="evidence at protein level"/>
<gene>
    <name type="primary">araF</name>
    <name type="ordered locus">b1901</name>
    <name type="ordered locus">JW1889</name>
</gene>
<keyword id="KW-0002">3D-structure</keyword>
<keyword id="KW-0903">Direct protein sequencing</keyword>
<keyword id="KW-0574">Periplasm</keyword>
<keyword id="KW-1185">Reference proteome</keyword>
<keyword id="KW-0732">Signal</keyword>
<keyword id="KW-0762">Sugar transport</keyword>
<keyword id="KW-0813">Transport</keyword>